<keyword id="KW-0687">Ribonucleoprotein</keyword>
<keyword id="KW-0689">Ribosomal protein</keyword>
<dbReference type="EMBL" id="CP000527">
    <property type="protein sequence ID" value="ABM28865.1"/>
    <property type="molecule type" value="Genomic_DNA"/>
</dbReference>
<dbReference type="RefSeq" id="WP_010938505.1">
    <property type="nucleotide sequence ID" value="NC_008751.1"/>
</dbReference>
<dbReference type="SMR" id="A1VEJ9"/>
<dbReference type="KEGG" id="dvl:Dvul_1848"/>
<dbReference type="HOGENOM" id="CLU_129084_1_3_7"/>
<dbReference type="Proteomes" id="UP000009173">
    <property type="component" value="Chromosome"/>
</dbReference>
<dbReference type="GO" id="GO:0015934">
    <property type="term" value="C:large ribosomal subunit"/>
    <property type="evidence" value="ECO:0007669"/>
    <property type="project" value="InterPro"/>
</dbReference>
<dbReference type="GO" id="GO:0003735">
    <property type="term" value="F:structural constituent of ribosome"/>
    <property type="evidence" value="ECO:0007669"/>
    <property type="project" value="InterPro"/>
</dbReference>
<dbReference type="GO" id="GO:0006412">
    <property type="term" value="P:translation"/>
    <property type="evidence" value="ECO:0007669"/>
    <property type="project" value="UniProtKB-UniRule"/>
</dbReference>
<dbReference type="HAMAP" id="MF_00340">
    <property type="entry name" value="Ribosomal_bL32"/>
    <property type="match status" value="1"/>
</dbReference>
<dbReference type="InterPro" id="IPR002677">
    <property type="entry name" value="Ribosomal_bL32"/>
</dbReference>
<dbReference type="InterPro" id="IPR044957">
    <property type="entry name" value="Ribosomal_bL32_bact"/>
</dbReference>
<dbReference type="InterPro" id="IPR011332">
    <property type="entry name" value="Ribosomal_zn-bd"/>
</dbReference>
<dbReference type="NCBIfam" id="TIGR01031">
    <property type="entry name" value="rpmF_bact"/>
    <property type="match status" value="1"/>
</dbReference>
<dbReference type="PANTHER" id="PTHR35534">
    <property type="entry name" value="50S RIBOSOMAL PROTEIN L32"/>
    <property type="match status" value="1"/>
</dbReference>
<dbReference type="PANTHER" id="PTHR35534:SF1">
    <property type="entry name" value="LARGE RIBOSOMAL SUBUNIT PROTEIN BL32"/>
    <property type="match status" value="1"/>
</dbReference>
<dbReference type="Pfam" id="PF01783">
    <property type="entry name" value="Ribosomal_L32p"/>
    <property type="match status" value="1"/>
</dbReference>
<dbReference type="SUPFAM" id="SSF57829">
    <property type="entry name" value="Zn-binding ribosomal proteins"/>
    <property type="match status" value="1"/>
</dbReference>
<accession>A1VEJ9</accession>
<sequence length="59" mass="6546">MAVQQNKKSRSRKGMRRSHDRVAVPAVVYCACGEPTAPHRACPSCGTYKGRQVTKQDNE</sequence>
<comment type="similarity">
    <text evidence="1">Belongs to the bacterial ribosomal protein bL32 family.</text>
</comment>
<reference key="1">
    <citation type="journal article" date="2009" name="Environ. Microbiol.">
        <title>Contribution of mobile genetic elements to Desulfovibrio vulgaris genome plasticity.</title>
        <authorList>
            <person name="Walker C.B."/>
            <person name="Stolyar S."/>
            <person name="Chivian D."/>
            <person name="Pinel N."/>
            <person name="Gabster J.A."/>
            <person name="Dehal P.S."/>
            <person name="He Z."/>
            <person name="Yang Z.K."/>
            <person name="Yen H.C."/>
            <person name="Zhou J."/>
            <person name="Wall J.D."/>
            <person name="Hazen T.C."/>
            <person name="Arkin A.P."/>
            <person name="Stahl D.A."/>
        </authorList>
    </citation>
    <scope>NUCLEOTIDE SEQUENCE [LARGE SCALE GENOMIC DNA]</scope>
    <source>
        <strain>DP4</strain>
    </source>
</reference>
<name>RL32_NITV4</name>
<feature type="chain" id="PRO_0000296458" description="Large ribosomal subunit protein bL32">
    <location>
        <begin position="1"/>
        <end position="59"/>
    </location>
</feature>
<feature type="region of interest" description="Disordered" evidence="2">
    <location>
        <begin position="1"/>
        <end position="20"/>
    </location>
</feature>
<feature type="compositionally biased region" description="Basic residues" evidence="2">
    <location>
        <begin position="7"/>
        <end position="19"/>
    </location>
</feature>
<protein>
    <recommendedName>
        <fullName evidence="1">Large ribosomal subunit protein bL32</fullName>
    </recommendedName>
    <alternativeName>
        <fullName evidence="3">50S ribosomal protein L32</fullName>
    </alternativeName>
</protein>
<proteinExistence type="inferred from homology"/>
<evidence type="ECO:0000255" key="1">
    <source>
        <dbReference type="HAMAP-Rule" id="MF_00340"/>
    </source>
</evidence>
<evidence type="ECO:0000256" key="2">
    <source>
        <dbReference type="SAM" id="MobiDB-lite"/>
    </source>
</evidence>
<evidence type="ECO:0000305" key="3"/>
<gene>
    <name evidence="1" type="primary">rpmF</name>
    <name type="ordered locus">Dvul_1848</name>
</gene>
<organism>
    <name type="scientific">Nitratidesulfovibrio vulgaris (strain DP4)</name>
    <name type="common">Desulfovibrio vulgaris</name>
    <dbReference type="NCBI Taxonomy" id="391774"/>
    <lineage>
        <taxon>Bacteria</taxon>
        <taxon>Pseudomonadati</taxon>
        <taxon>Thermodesulfobacteriota</taxon>
        <taxon>Desulfovibrionia</taxon>
        <taxon>Desulfovibrionales</taxon>
        <taxon>Desulfovibrionaceae</taxon>
        <taxon>Nitratidesulfovibrio</taxon>
    </lineage>
</organism>